<organism>
    <name type="scientific">Salmonella newport (strain SL254)</name>
    <dbReference type="NCBI Taxonomy" id="423368"/>
    <lineage>
        <taxon>Bacteria</taxon>
        <taxon>Pseudomonadati</taxon>
        <taxon>Pseudomonadota</taxon>
        <taxon>Gammaproteobacteria</taxon>
        <taxon>Enterobacterales</taxon>
        <taxon>Enterobacteriaceae</taxon>
        <taxon>Salmonella</taxon>
    </lineage>
</organism>
<proteinExistence type="inferred from homology"/>
<accession>B4T6U4</accession>
<name>RNB_SALNS</name>
<reference key="1">
    <citation type="journal article" date="2011" name="J. Bacteriol.">
        <title>Comparative genomics of 28 Salmonella enterica isolates: evidence for CRISPR-mediated adaptive sublineage evolution.</title>
        <authorList>
            <person name="Fricke W.F."/>
            <person name="Mammel M.K."/>
            <person name="McDermott P.F."/>
            <person name="Tartera C."/>
            <person name="White D.G."/>
            <person name="Leclerc J.E."/>
            <person name="Ravel J."/>
            <person name="Cebula T.A."/>
        </authorList>
    </citation>
    <scope>NUCLEOTIDE SEQUENCE [LARGE SCALE GENOMIC DNA]</scope>
    <source>
        <strain>SL254</strain>
    </source>
</reference>
<comment type="function">
    <text evidence="2">Involved in mRNA degradation. Hydrolyzes single-stranded polyribonucleotides processively in the 3' to 5' direction.</text>
</comment>
<comment type="catalytic activity">
    <reaction evidence="2">
        <text>Exonucleolytic cleavage in the 3'- to 5'-direction to yield nucleoside 5'-phosphates.</text>
        <dbReference type="EC" id="3.1.13.1"/>
    </reaction>
</comment>
<comment type="subcellular location">
    <subcellularLocation>
        <location evidence="2">Cytoplasm</location>
    </subcellularLocation>
</comment>
<comment type="similarity">
    <text evidence="2">Belongs to the RNR ribonuclease family. RNase II subfamily.</text>
</comment>
<dbReference type="EC" id="3.1.13.1" evidence="2"/>
<dbReference type="EMBL" id="CP001113">
    <property type="protein sequence ID" value="ACF63557.1"/>
    <property type="molecule type" value="Genomic_DNA"/>
</dbReference>
<dbReference type="RefSeq" id="WP_000485056.1">
    <property type="nucleotide sequence ID" value="NZ_CCMR01000003.1"/>
</dbReference>
<dbReference type="SMR" id="B4T6U4"/>
<dbReference type="KEGG" id="see:SNSL254_A1825"/>
<dbReference type="HOGENOM" id="CLU_002333_7_3_6"/>
<dbReference type="Proteomes" id="UP000008824">
    <property type="component" value="Chromosome"/>
</dbReference>
<dbReference type="GO" id="GO:0005829">
    <property type="term" value="C:cytosol"/>
    <property type="evidence" value="ECO:0007669"/>
    <property type="project" value="TreeGrafter"/>
</dbReference>
<dbReference type="GO" id="GO:0008859">
    <property type="term" value="F:exoribonuclease II activity"/>
    <property type="evidence" value="ECO:0007669"/>
    <property type="project" value="UniProtKB-UniRule"/>
</dbReference>
<dbReference type="GO" id="GO:0003723">
    <property type="term" value="F:RNA binding"/>
    <property type="evidence" value="ECO:0007669"/>
    <property type="project" value="UniProtKB-KW"/>
</dbReference>
<dbReference type="GO" id="GO:0006402">
    <property type="term" value="P:mRNA catabolic process"/>
    <property type="evidence" value="ECO:0007669"/>
    <property type="project" value="UniProtKB-UniRule"/>
</dbReference>
<dbReference type="FunFam" id="2.40.50.140:FF:000079">
    <property type="entry name" value="Exoribonuclease 2"/>
    <property type="match status" value="1"/>
</dbReference>
<dbReference type="FunFam" id="2.40.50.140:FF:000081">
    <property type="entry name" value="Exoribonuclease 2"/>
    <property type="match status" value="1"/>
</dbReference>
<dbReference type="FunFam" id="2.40.50.640:FF:000001">
    <property type="entry name" value="Exoribonuclease 2"/>
    <property type="match status" value="1"/>
</dbReference>
<dbReference type="Gene3D" id="2.40.50.640">
    <property type="match status" value="1"/>
</dbReference>
<dbReference type="Gene3D" id="2.40.50.140">
    <property type="entry name" value="Nucleic acid-binding proteins"/>
    <property type="match status" value="2"/>
</dbReference>
<dbReference type="HAMAP" id="MF_01036">
    <property type="entry name" value="RNase_II"/>
    <property type="match status" value="1"/>
</dbReference>
<dbReference type="InterPro" id="IPR011129">
    <property type="entry name" value="CSD"/>
</dbReference>
<dbReference type="InterPro" id="IPR012340">
    <property type="entry name" value="NA-bd_OB-fold"/>
</dbReference>
<dbReference type="InterPro" id="IPR013223">
    <property type="entry name" value="RNase_B_OB_dom"/>
</dbReference>
<dbReference type="InterPro" id="IPR011804">
    <property type="entry name" value="RNase_II"/>
</dbReference>
<dbReference type="InterPro" id="IPR001900">
    <property type="entry name" value="RNase_II/R"/>
</dbReference>
<dbReference type="InterPro" id="IPR022966">
    <property type="entry name" value="RNase_II/R_CS"/>
</dbReference>
<dbReference type="InterPro" id="IPR004476">
    <property type="entry name" value="RNase_II/RNase_R"/>
</dbReference>
<dbReference type="InterPro" id="IPR050180">
    <property type="entry name" value="RNR_Ribonuclease"/>
</dbReference>
<dbReference type="InterPro" id="IPR003029">
    <property type="entry name" value="S1_domain"/>
</dbReference>
<dbReference type="NCBIfam" id="TIGR00358">
    <property type="entry name" value="3_prime_RNase"/>
    <property type="match status" value="1"/>
</dbReference>
<dbReference type="NCBIfam" id="NF003455">
    <property type="entry name" value="PRK05054.1"/>
    <property type="match status" value="1"/>
</dbReference>
<dbReference type="NCBIfam" id="TIGR02062">
    <property type="entry name" value="RNase_B"/>
    <property type="match status" value="1"/>
</dbReference>
<dbReference type="PANTHER" id="PTHR23355:SF37">
    <property type="entry name" value="EXORIBONUCLEASE 2"/>
    <property type="match status" value="1"/>
</dbReference>
<dbReference type="PANTHER" id="PTHR23355">
    <property type="entry name" value="RIBONUCLEASE"/>
    <property type="match status" value="1"/>
</dbReference>
<dbReference type="Pfam" id="PF08206">
    <property type="entry name" value="OB_RNB"/>
    <property type="match status" value="1"/>
</dbReference>
<dbReference type="Pfam" id="PF00773">
    <property type="entry name" value="RNB"/>
    <property type="match status" value="1"/>
</dbReference>
<dbReference type="Pfam" id="PF00575">
    <property type="entry name" value="S1"/>
    <property type="match status" value="1"/>
</dbReference>
<dbReference type="SMART" id="SM00357">
    <property type="entry name" value="CSP"/>
    <property type="match status" value="1"/>
</dbReference>
<dbReference type="SMART" id="SM00955">
    <property type="entry name" value="RNB"/>
    <property type="match status" value="1"/>
</dbReference>
<dbReference type="SUPFAM" id="SSF50249">
    <property type="entry name" value="Nucleic acid-binding proteins"/>
    <property type="match status" value="4"/>
</dbReference>
<dbReference type="PROSITE" id="PS01175">
    <property type="entry name" value="RIBONUCLEASE_II"/>
    <property type="match status" value="1"/>
</dbReference>
<protein>
    <recommendedName>
        <fullName evidence="2">Exoribonuclease 2</fullName>
        <ecNumber evidence="2">3.1.13.1</ecNumber>
    </recommendedName>
    <alternativeName>
        <fullName evidence="2">Exoribonuclease II</fullName>
        <shortName evidence="2">RNase II</shortName>
        <shortName evidence="2">Ribonuclease II</shortName>
    </alternativeName>
</protein>
<keyword id="KW-0963">Cytoplasm</keyword>
<keyword id="KW-0269">Exonuclease</keyword>
<keyword id="KW-0378">Hydrolase</keyword>
<keyword id="KW-0540">Nuclease</keyword>
<keyword id="KW-0694">RNA-binding</keyword>
<gene>
    <name evidence="2" type="primary">rnb</name>
    <name type="ordered locus">SNSL254_A1825</name>
</gene>
<feature type="chain" id="PRO_1000135878" description="Exoribonuclease 2">
    <location>
        <begin position="1"/>
        <end position="644"/>
    </location>
</feature>
<feature type="domain" description="RNB" evidence="1">
    <location>
        <begin position="189"/>
        <end position="516"/>
    </location>
</feature>
<feature type="domain" description="S1 motif" evidence="2">
    <location>
        <begin position="561"/>
        <end position="643"/>
    </location>
</feature>
<sequence>MFQDNPLLAQLKQQLHSQTPRAEGVVKATEKGFGFLEVDAQKSYFIPPPQMKKVMHGDRIVAVIHTEKERESAEPEELIEPFLTRFVGKVQGKNDRLSIVPDHPLLKDAIPCRAARGVQHEFKEGDWAVAEMRRHPLKGDRSFYADLTQYITFADDHFVPWWVTLARHNLEKEAPNGVATEMLDEGLERQDLTALNFVTIDSASTEDMDDALYAEELADGRLQLTVAIADPTAWIAEGSKLDNTAKIRAFTNYLPGFNIPMLPRELSDDLCSLRANEVRPALACRMIIAADGTIDDDIAFFAATIESKAKLAYDNVSDWLENNGTWQPENEDIAQQIRLLHRICLSRSEWRHHHALVFKDRPDYRFVLGEKGEVLDIVAEPRRIANRIVEESMIAANLCAARVLRDKLGFGIYNVHTGFDPANADALAALLKTHGLHVDAEEVLTLEGFCKLRRELDAQPSGFLDSRIRRFQSFAEISTEPGPHFGLGLEAYATWTSPIRKYGDMINHRLLKAVIKGEAIARPQEDITQQMAERRRLNRMAERDVGDWLYARFLNDKAGTNTRFAAEIIDVSRGGMRVRLVDNGAIAFIPAPFLHAVRDELVCSQENGTVQIKGETVYKVTDVIDVTIAEVRMETRSIIARPAA</sequence>
<evidence type="ECO:0000255" key="1"/>
<evidence type="ECO:0000255" key="2">
    <source>
        <dbReference type="HAMAP-Rule" id="MF_01036"/>
    </source>
</evidence>